<evidence type="ECO:0000255" key="1">
    <source>
        <dbReference type="HAMAP-Rule" id="MF_00293"/>
    </source>
</evidence>
<name>PSBN_AGARO</name>
<accession>Q6EYL8</accession>
<keyword id="KW-0150">Chloroplast</keyword>
<keyword id="KW-0472">Membrane</keyword>
<keyword id="KW-0934">Plastid</keyword>
<keyword id="KW-0793">Thylakoid</keyword>
<keyword id="KW-0812">Transmembrane</keyword>
<keyword id="KW-1133">Transmembrane helix</keyword>
<dbReference type="EMBL" id="AF528892">
    <property type="protein sequence ID" value="AAQ09355.1"/>
    <property type="molecule type" value="Genomic_DNA"/>
</dbReference>
<dbReference type="SMR" id="Q6EYL8"/>
<dbReference type="GO" id="GO:0009535">
    <property type="term" value="C:chloroplast thylakoid membrane"/>
    <property type="evidence" value="ECO:0007669"/>
    <property type="project" value="UniProtKB-SubCell"/>
</dbReference>
<dbReference type="GO" id="GO:0015979">
    <property type="term" value="P:photosynthesis"/>
    <property type="evidence" value="ECO:0007669"/>
    <property type="project" value="InterPro"/>
</dbReference>
<dbReference type="HAMAP" id="MF_00293">
    <property type="entry name" value="PSII_PsbN"/>
    <property type="match status" value="1"/>
</dbReference>
<dbReference type="InterPro" id="IPR003398">
    <property type="entry name" value="PSII_PsbN"/>
</dbReference>
<dbReference type="PANTHER" id="PTHR35326">
    <property type="entry name" value="PROTEIN PSBN"/>
    <property type="match status" value="1"/>
</dbReference>
<dbReference type="PANTHER" id="PTHR35326:SF3">
    <property type="entry name" value="PROTEIN PSBN"/>
    <property type="match status" value="1"/>
</dbReference>
<dbReference type="Pfam" id="PF02468">
    <property type="entry name" value="PsbN"/>
    <property type="match status" value="1"/>
</dbReference>
<geneLocation type="chloroplast"/>
<protein>
    <recommendedName>
        <fullName evidence="1">Protein PsbN</fullName>
    </recommendedName>
</protein>
<sequence length="43" mass="4834">METATLVAISISRLLVSFTGYALYTAFGQPSEQLRDPFEEHED</sequence>
<comment type="function">
    <text evidence="1">May play a role in photosystem I and II biogenesis.</text>
</comment>
<comment type="subcellular location">
    <subcellularLocation>
        <location evidence="1">Plastid</location>
        <location evidence="1">Chloroplast thylakoid membrane</location>
        <topology evidence="1">Single-pass membrane protein</topology>
    </subcellularLocation>
</comment>
<comment type="similarity">
    <text evidence="1">Belongs to the PsbN family.</text>
</comment>
<comment type="caution">
    <text evidence="1">Originally thought to be a component of PSII; based on experiments in Synechocystis, N.tabacum and barley, and its absence from PSII in T.elongatus and T.vulcanus, this is probably not true.</text>
</comment>
<organism>
    <name type="scientific">Agathis robusta</name>
    <name type="common">Queensland kauri pine</name>
    <dbReference type="NCBI Taxonomy" id="60854"/>
    <lineage>
        <taxon>Eukaryota</taxon>
        <taxon>Viridiplantae</taxon>
        <taxon>Streptophyta</taxon>
        <taxon>Embryophyta</taxon>
        <taxon>Tracheophyta</taxon>
        <taxon>Spermatophyta</taxon>
        <taxon>Pinopsida</taxon>
        <taxon>Pinidae</taxon>
        <taxon>Conifers II</taxon>
        <taxon>Araucariales</taxon>
        <taxon>Araucariaceae</taxon>
        <taxon>Agathis</taxon>
    </lineage>
</organism>
<gene>
    <name evidence="1" type="primary">psbN</name>
</gene>
<reference key="1">
    <citation type="submission" date="2002-07" db="EMBL/GenBank/DDBJ databases">
        <title>Parsing out signal and noise for seed-plant phylogenetic inference.</title>
        <authorList>
            <person name="Graham S.W."/>
            <person name="Rai H.S."/>
            <person name="Ikegami K."/>
            <person name="Reeves P.A."/>
            <person name="Olmstead R.G."/>
        </authorList>
    </citation>
    <scope>NUCLEOTIDE SEQUENCE [GENOMIC DNA]</scope>
</reference>
<proteinExistence type="inferred from homology"/>
<feature type="chain" id="PRO_0000207861" description="Protein PsbN">
    <location>
        <begin position="1"/>
        <end position="43"/>
    </location>
</feature>
<feature type="transmembrane region" description="Helical" evidence="1">
    <location>
        <begin position="5"/>
        <end position="27"/>
    </location>
</feature>